<gene>
    <name evidence="1" type="primary">lptE</name>
    <name type="synonym">rlpB</name>
    <name type="ordered locus">EcolC_3004</name>
</gene>
<protein>
    <recommendedName>
        <fullName evidence="1">LPS-assembly lipoprotein LptE</fullName>
    </recommendedName>
</protein>
<sequence>MRYLATLLLSLAVLITAGCGWHLRDTTQVPSTMKVMILDSGDPNGPLSRAVRNQLRLNGVELLDKETTRKDVPSLRLGAVSISQDTASVFRNGQTAEYQMVMTVSASVLIPGRDIYPISAKVFRSFFDNPQMALAKDNEQEMIIKEMYDRAAEQLIRKLPSIRAADIRSDEEQTSTTTDTPATPARVSTTLGN</sequence>
<dbReference type="EMBL" id="CP000946">
    <property type="protein sequence ID" value="ACA78629.1"/>
    <property type="molecule type" value="Genomic_DNA"/>
</dbReference>
<dbReference type="RefSeq" id="WP_001269665.1">
    <property type="nucleotide sequence ID" value="NZ_MTFT01000005.1"/>
</dbReference>
<dbReference type="SMR" id="B1IYG7"/>
<dbReference type="KEGG" id="ecl:EcolC_3004"/>
<dbReference type="HOGENOM" id="CLU_103309_1_1_6"/>
<dbReference type="GO" id="GO:0009279">
    <property type="term" value="C:cell outer membrane"/>
    <property type="evidence" value="ECO:0007669"/>
    <property type="project" value="UniProtKB-SubCell"/>
</dbReference>
<dbReference type="GO" id="GO:1990351">
    <property type="term" value="C:transporter complex"/>
    <property type="evidence" value="ECO:0007669"/>
    <property type="project" value="TreeGrafter"/>
</dbReference>
<dbReference type="GO" id="GO:0001530">
    <property type="term" value="F:lipopolysaccharide binding"/>
    <property type="evidence" value="ECO:0007669"/>
    <property type="project" value="TreeGrafter"/>
</dbReference>
<dbReference type="GO" id="GO:0043165">
    <property type="term" value="P:Gram-negative-bacterium-type cell outer membrane assembly"/>
    <property type="evidence" value="ECO:0007669"/>
    <property type="project" value="UniProtKB-UniRule"/>
</dbReference>
<dbReference type="GO" id="GO:0015920">
    <property type="term" value="P:lipopolysaccharide transport"/>
    <property type="evidence" value="ECO:0007669"/>
    <property type="project" value="TreeGrafter"/>
</dbReference>
<dbReference type="FunFam" id="3.30.160.150:FF:000001">
    <property type="entry name" value="LPS-assembly lipoprotein LptE"/>
    <property type="match status" value="1"/>
</dbReference>
<dbReference type="Gene3D" id="3.30.160.150">
    <property type="entry name" value="Lipoprotein like domain"/>
    <property type="match status" value="1"/>
</dbReference>
<dbReference type="HAMAP" id="MF_01186">
    <property type="entry name" value="LPS_assembly_LptE"/>
    <property type="match status" value="1"/>
</dbReference>
<dbReference type="InterPro" id="IPR007485">
    <property type="entry name" value="LPS_assembly_LptE"/>
</dbReference>
<dbReference type="NCBIfam" id="NF008062">
    <property type="entry name" value="PRK10796.1"/>
    <property type="match status" value="1"/>
</dbReference>
<dbReference type="PANTHER" id="PTHR38098">
    <property type="entry name" value="LPS-ASSEMBLY LIPOPROTEIN LPTE"/>
    <property type="match status" value="1"/>
</dbReference>
<dbReference type="PANTHER" id="PTHR38098:SF1">
    <property type="entry name" value="LPS-ASSEMBLY LIPOPROTEIN LPTE"/>
    <property type="match status" value="1"/>
</dbReference>
<dbReference type="Pfam" id="PF04390">
    <property type="entry name" value="LptE"/>
    <property type="match status" value="1"/>
</dbReference>
<dbReference type="PROSITE" id="PS51257">
    <property type="entry name" value="PROKAR_LIPOPROTEIN"/>
    <property type="match status" value="1"/>
</dbReference>
<proteinExistence type="inferred from homology"/>
<name>LPTE_ECOLC</name>
<organism>
    <name type="scientific">Escherichia coli (strain ATCC 8739 / DSM 1576 / NBRC 3972 / NCIMB 8545 / WDCM 00012 / Crooks)</name>
    <dbReference type="NCBI Taxonomy" id="481805"/>
    <lineage>
        <taxon>Bacteria</taxon>
        <taxon>Pseudomonadati</taxon>
        <taxon>Pseudomonadota</taxon>
        <taxon>Gammaproteobacteria</taxon>
        <taxon>Enterobacterales</taxon>
        <taxon>Enterobacteriaceae</taxon>
        <taxon>Escherichia</taxon>
    </lineage>
</organism>
<reference key="1">
    <citation type="submission" date="2008-02" db="EMBL/GenBank/DDBJ databases">
        <title>Complete sequence of Escherichia coli C str. ATCC 8739.</title>
        <authorList>
            <person name="Copeland A."/>
            <person name="Lucas S."/>
            <person name="Lapidus A."/>
            <person name="Glavina del Rio T."/>
            <person name="Dalin E."/>
            <person name="Tice H."/>
            <person name="Bruce D."/>
            <person name="Goodwin L."/>
            <person name="Pitluck S."/>
            <person name="Kiss H."/>
            <person name="Brettin T."/>
            <person name="Detter J.C."/>
            <person name="Han C."/>
            <person name="Kuske C.R."/>
            <person name="Schmutz J."/>
            <person name="Larimer F."/>
            <person name="Land M."/>
            <person name="Hauser L."/>
            <person name="Kyrpides N."/>
            <person name="Mikhailova N."/>
            <person name="Ingram L."/>
            <person name="Richardson P."/>
        </authorList>
    </citation>
    <scope>NUCLEOTIDE SEQUENCE [LARGE SCALE GENOMIC DNA]</scope>
    <source>
        <strain>ATCC 8739 / DSM 1576 / NBRC 3972 / NCIMB 8545 / WDCM 00012 / Crooks</strain>
    </source>
</reference>
<keyword id="KW-0998">Cell outer membrane</keyword>
<keyword id="KW-0449">Lipoprotein</keyword>
<keyword id="KW-0472">Membrane</keyword>
<keyword id="KW-0564">Palmitate</keyword>
<keyword id="KW-0732">Signal</keyword>
<accession>B1IYG7</accession>
<comment type="function">
    <text evidence="1">Together with LptD, is involved in the assembly of lipopolysaccharide (LPS) at the surface of the outer membrane. Required for the proper assembly of LptD. Binds LPS and may serve as the LPS recognition site at the outer membrane.</text>
</comment>
<comment type="subunit">
    <text evidence="1">Component of the lipopolysaccharide transport and assembly complex. Interacts with LptD.</text>
</comment>
<comment type="subcellular location">
    <subcellularLocation>
        <location evidence="1">Cell outer membrane</location>
        <topology evidence="1">Lipid-anchor</topology>
    </subcellularLocation>
</comment>
<comment type="similarity">
    <text evidence="1">Belongs to the LptE lipoprotein family.</text>
</comment>
<evidence type="ECO:0000255" key="1">
    <source>
        <dbReference type="HAMAP-Rule" id="MF_01186"/>
    </source>
</evidence>
<evidence type="ECO:0000256" key="2">
    <source>
        <dbReference type="SAM" id="MobiDB-lite"/>
    </source>
</evidence>
<feature type="signal peptide" evidence="1">
    <location>
        <begin position="1"/>
        <end position="18"/>
    </location>
</feature>
<feature type="chain" id="PRO_1000085453" description="LPS-assembly lipoprotein LptE">
    <location>
        <begin position="19"/>
        <end position="193"/>
    </location>
</feature>
<feature type="region of interest" description="Disordered" evidence="2">
    <location>
        <begin position="166"/>
        <end position="193"/>
    </location>
</feature>
<feature type="compositionally biased region" description="Low complexity" evidence="2">
    <location>
        <begin position="174"/>
        <end position="186"/>
    </location>
</feature>
<feature type="lipid moiety-binding region" description="N-palmitoyl cysteine" evidence="1">
    <location>
        <position position="19"/>
    </location>
</feature>
<feature type="lipid moiety-binding region" description="S-diacylglycerol cysteine" evidence="1">
    <location>
        <position position="19"/>
    </location>
</feature>